<name>MTAD_HALH5</name>
<comment type="function">
    <text evidence="1">Catalyzes the deamination of 5-methylthioadenosine and S-adenosyl-L-homocysteine into 5-methylthioinosine and S-inosyl-L-homocysteine, respectively. Is also able to deaminate adenosine.</text>
</comment>
<comment type="catalytic activity">
    <reaction evidence="1">
        <text>S-adenosyl-L-homocysteine + H2O + H(+) = S-inosyl-L-homocysteine + NH4(+)</text>
        <dbReference type="Rhea" id="RHEA:20716"/>
        <dbReference type="ChEBI" id="CHEBI:15377"/>
        <dbReference type="ChEBI" id="CHEBI:15378"/>
        <dbReference type="ChEBI" id="CHEBI:28938"/>
        <dbReference type="ChEBI" id="CHEBI:57856"/>
        <dbReference type="ChEBI" id="CHEBI:57985"/>
        <dbReference type="EC" id="3.5.4.28"/>
    </reaction>
</comment>
<comment type="catalytic activity">
    <reaction evidence="1">
        <text>S-methyl-5'-thioadenosine + H2O + H(+) = S-methyl-5'-thioinosine + NH4(+)</text>
        <dbReference type="Rhea" id="RHEA:25025"/>
        <dbReference type="ChEBI" id="CHEBI:15377"/>
        <dbReference type="ChEBI" id="CHEBI:15378"/>
        <dbReference type="ChEBI" id="CHEBI:17509"/>
        <dbReference type="ChEBI" id="CHEBI:28938"/>
        <dbReference type="ChEBI" id="CHEBI:48595"/>
        <dbReference type="EC" id="3.5.4.31"/>
    </reaction>
</comment>
<comment type="cofactor">
    <cofactor evidence="1">
        <name>Zn(2+)</name>
        <dbReference type="ChEBI" id="CHEBI:29105"/>
    </cofactor>
    <text evidence="1">Binds 1 zinc ion per subunit.</text>
</comment>
<comment type="similarity">
    <text evidence="1">Belongs to the metallo-dependent hydrolases superfamily. MTA/SAH deaminase family.</text>
</comment>
<comment type="sequence caution" evidence="2">
    <conflict type="erroneous initiation">
        <sequence resource="EMBL-CDS" id="BAB05411"/>
    </conflict>
</comment>
<gene>
    <name evidence="1" type="primary">mtaD</name>
    <name type="ordered locus">BH1692</name>
</gene>
<accession>Q9KC82</accession>
<feature type="chain" id="PRO_0000312446" description="5-methylthioadenosine/S-adenosylhomocysteine deaminase">
    <location>
        <begin position="1"/>
        <end position="438"/>
    </location>
</feature>
<feature type="binding site" evidence="1">
    <location>
        <position position="66"/>
    </location>
    <ligand>
        <name>Zn(2+)</name>
        <dbReference type="ChEBI" id="CHEBI:29105"/>
    </ligand>
</feature>
<feature type="binding site" evidence="1">
    <location>
        <position position="68"/>
    </location>
    <ligand>
        <name>Zn(2+)</name>
        <dbReference type="ChEBI" id="CHEBI:29105"/>
    </ligand>
</feature>
<feature type="binding site" evidence="1">
    <location>
        <position position="95"/>
    </location>
    <ligand>
        <name>substrate</name>
    </ligand>
</feature>
<feature type="binding site" evidence="1">
    <location>
        <position position="148"/>
    </location>
    <ligand>
        <name>substrate</name>
    </ligand>
</feature>
<feature type="binding site" evidence="1">
    <location>
        <position position="188"/>
    </location>
    <ligand>
        <name>substrate</name>
    </ligand>
</feature>
<feature type="binding site" evidence="1">
    <location>
        <position position="215"/>
    </location>
    <ligand>
        <name>Zn(2+)</name>
        <dbReference type="ChEBI" id="CHEBI:29105"/>
    </ligand>
</feature>
<feature type="binding site" evidence="1">
    <location>
        <position position="218"/>
    </location>
    <ligand>
        <name>substrate</name>
    </ligand>
</feature>
<feature type="binding site" evidence="1">
    <location>
        <position position="305"/>
    </location>
    <ligand>
        <name>substrate</name>
    </ligand>
</feature>
<feature type="binding site" evidence="1">
    <location>
        <position position="305"/>
    </location>
    <ligand>
        <name>Zn(2+)</name>
        <dbReference type="ChEBI" id="CHEBI:29105"/>
    </ligand>
</feature>
<dbReference type="EC" id="3.5.4.28" evidence="1"/>
<dbReference type="EC" id="3.5.4.31" evidence="1"/>
<dbReference type="EMBL" id="BA000004">
    <property type="protein sequence ID" value="BAB05411.1"/>
    <property type="status" value="ALT_INIT"/>
    <property type="molecule type" value="Genomic_DNA"/>
</dbReference>
<dbReference type="PIR" id="D83861">
    <property type="entry name" value="D83861"/>
</dbReference>
<dbReference type="RefSeq" id="WP_041820494.1">
    <property type="nucleotide sequence ID" value="NC_002570.2"/>
</dbReference>
<dbReference type="SMR" id="Q9KC82"/>
<dbReference type="STRING" id="272558.gene:10727590"/>
<dbReference type="KEGG" id="bha:BH1692"/>
<dbReference type="eggNOG" id="COG0402">
    <property type="taxonomic scope" value="Bacteria"/>
</dbReference>
<dbReference type="HOGENOM" id="CLU_012358_2_0_9"/>
<dbReference type="OrthoDB" id="9807210at2"/>
<dbReference type="Proteomes" id="UP000001258">
    <property type="component" value="Chromosome"/>
</dbReference>
<dbReference type="GO" id="GO:0090614">
    <property type="term" value="F:5'-methylthioadenosine deaminase activity"/>
    <property type="evidence" value="ECO:0007669"/>
    <property type="project" value="UniProtKB-UniRule"/>
</dbReference>
<dbReference type="GO" id="GO:0046872">
    <property type="term" value="F:metal ion binding"/>
    <property type="evidence" value="ECO:0007669"/>
    <property type="project" value="UniProtKB-KW"/>
</dbReference>
<dbReference type="GO" id="GO:0050270">
    <property type="term" value="F:S-adenosylhomocysteine deaminase activity"/>
    <property type="evidence" value="ECO:0007669"/>
    <property type="project" value="UniProtKB-UniRule"/>
</dbReference>
<dbReference type="CDD" id="cd01298">
    <property type="entry name" value="ATZ_TRZ_like"/>
    <property type="match status" value="1"/>
</dbReference>
<dbReference type="FunFam" id="3.20.20.140:FF:000014">
    <property type="entry name" value="5-methylthioadenosine/S-adenosylhomocysteine deaminase"/>
    <property type="match status" value="1"/>
</dbReference>
<dbReference type="Gene3D" id="3.20.20.140">
    <property type="entry name" value="Metal-dependent hydrolases"/>
    <property type="match status" value="1"/>
</dbReference>
<dbReference type="Gene3D" id="2.30.40.10">
    <property type="entry name" value="Urease, subunit C, domain 1"/>
    <property type="match status" value="1"/>
</dbReference>
<dbReference type="HAMAP" id="MF_01281">
    <property type="entry name" value="MTA_SAH_deamin"/>
    <property type="match status" value="1"/>
</dbReference>
<dbReference type="InterPro" id="IPR006680">
    <property type="entry name" value="Amidohydro-rel"/>
</dbReference>
<dbReference type="InterPro" id="IPR023512">
    <property type="entry name" value="Deaminase_MtaD/DadD"/>
</dbReference>
<dbReference type="InterPro" id="IPR011059">
    <property type="entry name" value="Metal-dep_hydrolase_composite"/>
</dbReference>
<dbReference type="InterPro" id="IPR032466">
    <property type="entry name" value="Metal_Hydrolase"/>
</dbReference>
<dbReference type="InterPro" id="IPR050287">
    <property type="entry name" value="MTA/SAH_deaminase"/>
</dbReference>
<dbReference type="PANTHER" id="PTHR43794:SF11">
    <property type="entry name" value="AMIDOHYDROLASE-RELATED DOMAIN-CONTAINING PROTEIN"/>
    <property type="match status" value="1"/>
</dbReference>
<dbReference type="PANTHER" id="PTHR43794">
    <property type="entry name" value="AMINOHYDROLASE SSNA-RELATED"/>
    <property type="match status" value="1"/>
</dbReference>
<dbReference type="Pfam" id="PF01979">
    <property type="entry name" value="Amidohydro_1"/>
    <property type="match status" value="1"/>
</dbReference>
<dbReference type="SUPFAM" id="SSF51338">
    <property type="entry name" value="Composite domain of metallo-dependent hydrolases"/>
    <property type="match status" value="1"/>
</dbReference>
<dbReference type="SUPFAM" id="SSF51556">
    <property type="entry name" value="Metallo-dependent hydrolases"/>
    <property type="match status" value="1"/>
</dbReference>
<keyword id="KW-0378">Hydrolase</keyword>
<keyword id="KW-0479">Metal-binding</keyword>
<keyword id="KW-1185">Reference proteome</keyword>
<keyword id="KW-0862">Zinc</keyword>
<evidence type="ECO:0000255" key="1">
    <source>
        <dbReference type="HAMAP-Rule" id="MF_01281"/>
    </source>
</evidence>
<evidence type="ECO:0000305" key="2"/>
<protein>
    <recommendedName>
        <fullName evidence="1">5-methylthioadenosine/S-adenosylhomocysteine deaminase</fullName>
        <shortName evidence="1">MTA/SAH deaminase</shortName>
        <ecNumber evidence="1">3.5.4.28</ecNumber>
        <ecNumber evidence="1">3.5.4.31</ecNumber>
    </recommendedName>
</protein>
<proteinExistence type="inferred from homology"/>
<reference key="1">
    <citation type="journal article" date="2000" name="Nucleic Acids Res.">
        <title>Complete genome sequence of the alkaliphilic bacterium Bacillus halodurans and genomic sequence comparison with Bacillus subtilis.</title>
        <authorList>
            <person name="Takami H."/>
            <person name="Nakasone K."/>
            <person name="Takaki Y."/>
            <person name="Maeno G."/>
            <person name="Sasaki R."/>
            <person name="Masui N."/>
            <person name="Fuji F."/>
            <person name="Hirama C."/>
            <person name="Nakamura Y."/>
            <person name="Ogasawara N."/>
            <person name="Kuhara S."/>
            <person name="Horikoshi K."/>
        </authorList>
    </citation>
    <scope>NUCLEOTIDE SEQUENCE [LARGE SCALE GENOMIC DNA]</scope>
    <source>
        <strain>ATCC BAA-125 / DSM 18197 / FERM 7344 / JCM 9153 / C-125</strain>
    </source>
</reference>
<organism>
    <name type="scientific">Halalkalibacterium halodurans (strain ATCC BAA-125 / DSM 18197 / FERM 7344 / JCM 9153 / C-125)</name>
    <name type="common">Bacillus halodurans</name>
    <dbReference type="NCBI Taxonomy" id="272558"/>
    <lineage>
        <taxon>Bacteria</taxon>
        <taxon>Bacillati</taxon>
        <taxon>Bacillota</taxon>
        <taxon>Bacilli</taxon>
        <taxon>Bacillales</taxon>
        <taxon>Bacillaceae</taxon>
        <taxon>Halalkalibacterium (ex Joshi et al. 2022)</taxon>
    </lineage>
</organism>
<sequence>MGTIVKNVSIVTGQAEAPFIRHGYFKFADGVIVSVAEGTPSPEEIDRVEVIDGKGKWVMPGMINTHGHLGMSLLRGHSDDLPLQSWLTEKMWPFEGKMDREAVHHARQLAMAEMIKSGTTTFLEMYHLYMDDLAEAVVEQGPRAVLMRSMIGLCSESEQREKLKEAVTFATTWNGDGNGRITTMMAPHAPYTCPPSFIEMIVDEADRIDLPLHTHMAETQREVEEHRKTYGVHPLVHFEQLGFLKDRHWLLAHCVHLGEEELDILEQHPSVHVSHNPMSNLKLGSGIANVQSMLERGINICLGTDSVASNNHLDLVEEMRIAALLQKGAVLDPTAIPAETAIAMATKNGAKALRLPQVGTIEAGKRADFIMIDPQCLHLQPHEHVMSHLVYALKGADVQDVFVEGAPLMLNKELKTFDEEKLQFEANAHYQRICEKLK</sequence>